<keyword id="KW-1185">Reference proteome</keyword>
<keyword id="KW-0677">Repeat</keyword>
<keyword id="KW-0833">Ubl conjugation pathway</keyword>
<keyword id="KW-0853">WD repeat</keyword>
<name>WDR48_BRUMA</name>
<dbReference type="EMBL" id="DS239412">
    <property type="protein sequence ID" value="EDP31490.1"/>
    <property type="status" value="ALT_SEQ"/>
    <property type="molecule type" value="Genomic_DNA"/>
</dbReference>
<dbReference type="RefSeq" id="XP_001899768.1">
    <property type="nucleotide sequence ID" value="XM_001899733.1"/>
</dbReference>
<dbReference type="SMR" id="A8Q2R5"/>
<dbReference type="FunCoup" id="A8Q2R5">
    <property type="interactions" value="2792"/>
</dbReference>
<dbReference type="STRING" id="6279.A8Q2R5"/>
<dbReference type="WormBase" id="Bm3846a">
    <property type="protein sequence ID" value="BM22799"/>
    <property type="gene ID" value="WBGene00224107"/>
    <property type="gene designation" value="Bma-wdr-48"/>
</dbReference>
<dbReference type="InParanoid" id="A8Q2R5"/>
<dbReference type="Proteomes" id="UP000006672">
    <property type="component" value="Unassembled WGS sequence"/>
</dbReference>
<dbReference type="GO" id="GO:0043130">
    <property type="term" value="F:ubiquitin binding"/>
    <property type="evidence" value="ECO:0007669"/>
    <property type="project" value="TreeGrafter"/>
</dbReference>
<dbReference type="GO" id="GO:0000724">
    <property type="term" value="P:double-strand break repair via homologous recombination"/>
    <property type="evidence" value="ECO:0007669"/>
    <property type="project" value="TreeGrafter"/>
</dbReference>
<dbReference type="CDD" id="cd17041">
    <property type="entry name" value="Ubl_WDR48"/>
    <property type="match status" value="1"/>
</dbReference>
<dbReference type="CDD" id="cd00200">
    <property type="entry name" value="WD40"/>
    <property type="match status" value="1"/>
</dbReference>
<dbReference type="Gene3D" id="2.130.10.10">
    <property type="entry name" value="YVTN repeat-like/Quinoprotein amine dehydrogenase"/>
    <property type="match status" value="2"/>
</dbReference>
<dbReference type="InterPro" id="IPR020472">
    <property type="entry name" value="G-protein_beta_WD-40_rep"/>
</dbReference>
<dbReference type="InterPro" id="IPR015943">
    <property type="entry name" value="WD40/YVTN_repeat-like_dom_sf"/>
</dbReference>
<dbReference type="InterPro" id="IPR019775">
    <property type="entry name" value="WD40_repeat_CS"/>
</dbReference>
<dbReference type="InterPro" id="IPR036322">
    <property type="entry name" value="WD40_repeat_dom_sf"/>
</dbReference>
<dbReference type="InterPro" id="IPR001680">
    <property type="entry name" value="WD40_rpt"/>
</dbReference>
<dbReference type="InterPro" id="IPR051246">
    <property type="entry name" value="WDR48"/>
</dbReference>
<dbReference type="InterPro" id="IPR021772">
    <property type="entry name" value="WDR48/Bun107"/>
</dbReference>
<dbReference type="PANTHER" id="PTHR19862">
    <property type="entry name" value="WD REPEAT-CONTAINING PROTEIN 48"/>
    <property type="match status" value="1"/>
</dbReference>
<dbReference type="PANTHER" id="PTHR19862:SF14">
    <property type="entry name" value="WD REPEAT-CONTAINING PROTEIN 48"/>
    <property type="match status" value="1"/>
</dbReference>
<dbReference type="Pfam" id="PF11816">
    <property type="entry name" value="DUF3337"/>
    <property type="match status" value="1"/>
</dbReference>
<dbReference type="Pfam" id="PF00400">
    <property type="entry name" value="WD40"/>
    <property type="match status" value="6"/>
</dbReference>
<dbReference type="PRINTS" id="PR00320">
    <property type="entry name" value="GPROTEINBRPT"/>
</dbReference>
<dbReference type="SMART" id="SM00320">
    <property type="entry name" value="WD40"/>
    <property type="match status" value="7"/>
</dbReference>
<dbReference type="SUPFAM" id="SSF50978">
    <property type="entry name" value="WD40 repeat-like"/>
    <property type="match status" value="1"/>
</dbReference>
<dbReference type="PROSITE" id="PS00678">
    <property type="entry name" value="WD_REPEATS_1"/>
    <property type="match status" value="2"/>
</dbReference>
<dbReference type="PROSITE" id="PS50082">
    <property type="entry name" value="WD_REPEATS_2"/>
    <property type="match status" value="5"/>
</dbReference>
<dbReference type="PROSITE" id="PS50294">
    <property type="entry name" value="WD_REPEATS_REGION"/>
    <property type="match status" value="1"/>
</dbReference>
<protein>
    <recommendedName>
        <fullName>WD repeat-containing protein 48 homolog</fullName>
    </recommendedName>
</protein>
<proteinExistence type="inferred from homology"/>
<accession>A8Q2R5</accession>
<sequence length="660" mass="74668">MTAIPVKKKVQVSFVIRDEKEPMHRSGVNCLQYDAQTGRLFSGGSDTIIRIWKSPDRKDDSGSSYSVGGKTRVRRDLHLQSMEHHTDWVNDIVLCCGVISASSDTTVKVWNAQKGFCMSTLRTHRDYVRALAYARDVEMVASGGFDQLIYLWDIATLTKLTALNNTVTTSSLTGNKDSIYSLATNPSGTVVISGSTEKVLRVFDPRACQKLMKLRGHTDNVKAVVVNRDGTQCISASSDGTIKLWSIGQQCCISSLKCHSESVWALQVDSNFSCVYSGGRDKRIFRTAINDFKTAQLMFIEDAPVQRLQLIDSESRFIWTATWNSSIKRWPLPSDAQISVEIKSDQYGETIPSIHEPDLTIPGAASIRQHVVLNDKRHIVTKDTDDNVAMWDVLKGRKVCDHGKRPMEEVIKDHFKKVFVPSWFTVDLKSGMLQITLDESDFFSAWVSAKDAGFPNIQNDTKINYGGMLLRALFEHWSRSFSDVDEESPTHRFNSVPGHTPLILCESTGRPIFRLMIRDAAHETESQMLSDFVPPWVLDVVERNQLPKFNKMPFFLLPHLSLGIKTPKKDRLSATEMLQVRKVMEHVYEKILNVNDASYSENGIPSAAQMLSPSLQANIEERVELYCQDQKLDPEMDLRTVKHFIWKQGGDLMLYYKPIR</sequence>
<organism>
    <name type="scientific">Brugia malayi</name>
    <name type="common">Filarial nematode worm</name>
    <dbReference type="NCBI Taxonomy" id="6279"/>
    <lineage>
        <taxon>Eukaryota</taxon>
        <taxon>Metazoa</taxon>
        <taxon>Ecdysozoa</taxon>
        <taxon>Nematoda</taxon>
        <taxon>Chromadorea</taxon>
        <taxon>Rhabditida</taxon>
        <taxon>Spirurina</taxon>
        <taxon>Spiruromorpha</taxon>
        <taxon>Filarioidea</taxon>
        <taxon>Onchocercidae</taxon>
        <taxon>Brugia</taxon>
    </lineage>
</organism>
<feature type="chain" id="PRO_0000378976" description="WD repeat-containing protein 48 homolog">
    <location>
        <begin position="1"/>
        <end position="660"/>
    </location>
</feature>
<feature type="repeat" description="WD 1">
    <location>
        <begin position="23"/>
        <end position="78"/>
    </location>
</feature>
<feature type="repeat" description="WD 2">
    <location>
        <begin position="84"/>
        <end position="120"/>
    </location>
</feature>
<feature type="repeat" description="WD 3">
    <location>
        <begin position="123"/>
        <end position="162"/>
    </location>
</feature>
<feature type="repeat" description="WD 4">
    <location>
        <begin position="174"/>
        <end position="213"/>
    </location>
</feature>
<feature type="repeat" description="WD 5">
    <location>
        <begin position="216"/>
        <end position="255"/>
    </location>
</feature>
<feature type="repeat" description="WD 6">
    <location>
        <begin position="258"/>
        <end position="297"/>
    </location>
</feature>
<feature type="repeat" description="WD 7">
    <location>
        <begin position="300"/>
        <end position="341"/>
    </location>
</feature>
<feature type="repeat" description="WD 8">
    <location>
        <begin position="362"/>
        <end position="401"/>
    </location>
</feature>
<reference key="1">
    <citation type="journal article" date="2007" name="Science">
        <title>Draft genome of the filarial nematode parasite Brugia malayi.</title>
        <authorList>
            <person name="Ghedin E."/>
            <person name="Wang S."/>
            <person name="Spiro D."/>
            <person name="Caler E."/>
            <person name="Zhao Q."/>
            <person name="Crabtree J."/>
            <person name="Allen J.E."/>
            <person name="Delcher A.L."/>
            <person name="Guiliano D.B."/>
            <person name="Miranda-Saavedra D."/>
            <person name="Angiuoli S.V."/>
            <person name="Creasy T."/>
            <person name="Amedeo P."/>
            <person name="Haas B."/>
            <person name="El-Sayed N.M."/>
            <person name="Wortman J.R."/>
            <person name="Feldblyum T."/>
            <person name="Tallon L."/>
            <person name="Schatz M."/>
            <person name="Shumway M."/>
            <person name="Koo H."/>
            <person name="Salzberg S.L."/>
            <person name="Schobel S."/>
            <person name="Pertea M."/>
            <person name="Pop M."/>
            <person name="White O."/>
            <person name="Barton G.J."/>
            <person name="Carlow C.K.S."/>
            <person name="Crawford M.J."/>
            <person name="Daub J."/>
            <person name="Dimmic M.W."/>
            <person name="Estes C.F."/>
            <person name="Foster J.M."/>
            <person name="Ganatra M."/>
            <person name="Gregory W.F."/>
            <person name="Johnson N.M."/>
            <person name="Jin J."/>
            <person name="Komuniecki R."/>
            <person name="Korf I."/>
            <person name="Kumar S."/>
            <person name="Laney S."/>
            <person name="Li B.-W."/>
            <person name="Li W."/>
            <person name="Lindblom T.H."/>
            <person name="Lustigman S."/>
            <person name="Ma D."/>
            <person name="Maina C.V."/>
            <person name="Martin D.M."/>
            <person name="McCarter J.P."/>
            <person name="McReynolds L."/>
            <person name="Mitreva M."/>
            <person name="Nutman T.B."/>
            <person name="Parkinson J."/>
            <person name="Peregrin-Alvarez J.M."/>
            <person name="Poole C."/>
            <person name="Ren Q."/>
            <person name="Saunders L."/>
            <person name="Sluder A.E."/>
            <person name="Smith K."/>
            <person name="Stanke M."/>
            <person name="Unnasch T.R."/>
            <person name="Ware J."/>
            <person name="Wei A.D."/>
            <person name="Weil G."/>
            <person name="Williams D.J."/>
            <person name="Zhang Y."/>
            <person name="Williams S.A."/>
            <person name="Fraser-Liggett C."/>
            <person name="Slatko B."/>
            <person name="Blaxter M.L."/>
            <person name="Scott A.L."/>
        </authorList>
    </citation>
    <scope>NUCLEOTIDE SEQUENCE [LARGE SCALE GENOMIC DNA]</scope>
</reference>
<evidence type="ECO:0000250" key="1"/>
<evidence type="ECO:0000305" key="2"/>
<comment type="function">
    <text evidence="1">Regulator of deubiquitinating complexes. Activates deubiquitination by increasing the catalytic turnover without increasing the affinity of deubiquitinating enzymes for the substrate (By similarity).</text>
</comment>
<comment type="similarity">
    <text evidence="2">Belongs to the WD repeat WDR48 family.</text>
</comment>
<comment type="sequence caution" evidence="2">
    <conflict type="erroneous gene model prediction">
        <sequence resource="EMBL-CDS" id="EDP31490"/>
    </conflict>
</comment>
<gene>
    <name type="ORF">Bm1_41555</name>
</gene>